<accession>Q17958</accession>
<sequence>MNEEGGYLGAMTYQCLYSPVMEKIKQQHRDDPRASLALNKLHTALTTCEQASPSFLYDFTKVLLDDSELSVNLQESYLRMHDTSPTNDLIVSGYEQNADYKELTKRAIELRRVLSRVPEEMSDRHAFLETIKLIASSIKKLLEAINAVYRIVPLTAQPAVEKRKREFVHYSKRFSNTLKTYFKDQNANQVSVSANQLVFQTTMIVRTINEKLRRG</sequence>
<name>PDC10_CAEEL</name>
<protein>
    <recommendedName>
        <fullName evidence="1">Programmed cell death protein 10 homolog</fullName>
    </recommendedName>
    <alternativeName>
        <fullName evidence="3">Cerebral cavernous malformation protein 3</fullName>
    </alternativeName>
</protein>
<keyword id="KW-1003">Cell membrane</keyword>
<keyword id="KW-0963">Cytoplasm</keyword>
<keyword id="KW-0472">Membrane</keyword>
<keyword id="KW-1185">Reference proteome</keyword>
<proteinExistence type="evidence at protein level"/>
<dbReference type="EMBL" id="BX284602">
    <property type="protein sequence ID" value="CAA90115.2"/>
    <property type="molecule type" value="Genomic_DNA"/>
</dbReference>
<dbReference type="PIR" id="T19253">
    <property type="entry name" value="T19253"/>
</dbReference>
<dbReference type="RefSeq" id="NP_496290.2">
    <property type="nucleotide sequence ID" value="NM_063889.5"/>
</dbReference>
<dbReference type="SMR" id="Q17958"/>
<dbReference type="DIP" id="DIP-26279N"/>
<dbReference type="FunCoup" id="Q17958">
    <property type="interactions" value="3273"/>
</dbReference>
<dbReference type="IntAct" id="Q17958">
    <property type="interactions" value="4"/>
</dbReference>
<dbReference type="STRING" id="6239.C14A4.11.1"/>
<dbReference type="PaxDb" id="6239-C14A4.11.1"/>
<dbReference type="PeptideAtlas" id="Q17958"/>
<dbReference type="EnsemblMetazoa" id="C14A4.11.1">
    <property type="protein sequence ID" value="C14A4.11.1"/>
    <property type="gene ID" value="WBGene00007561"/>
</dbReference>
<dbReference type="GeneID" id="174638"/>
<dbReference type="KEGG" id="cel:CELE_C14A4.11"/>
<dbReference type="UCSC" id="C14A4.11">
    <property type="organism name" value="c. elegans"/>
</dbReference>
<dbReference type="AGR" id="WB:WBGene00007561"/>
<dbReference type="CTD" id="174638"/>
<dbReference type="WormBase" id="C14A4.11">
    <property type="protein sequence ID" value="CE30598"/>
    <property type="gene ID" value="WBGene00007561"/>
    <property type="gene designation" value="ccm-3"/>
</dbReference>
<dbReference type="eggNOG" id="KOG4025">
    <property type="taxonomic scope" value="Eukaryota"/>
</dbReference>
<dbReference type="GeneTree" id="ENSGT00390000017913"/>
<dbReference type="HOGENOM" id="CLU_083906_1_0_1"/>
<dbReference type="InParanoid" id="Q17958"/>
<dbReference type="OMA" id="YQCLYSG"/>
<dbReference type="OrthoDB" id="6017654at2759"/>
<dbReference type="PhylomeDB" id="Q17958"/>
<dbReference type="PRO" id="PR:Q17958"/>
<dbReference type="Proteomes" id="UP000001940">
    <property type="component" value="Chromosome II"/>
</dbReference>
<dbReference type="Bgee" id="WBGene00007561">
    <property type="expression patterns" value="Expressed in pharyngeal muscle cell (C elegans) and 4 other cell types or tissues"/>
</dbReference>
<dbReference type="GO" id="GO:0005737">
    <property type="term" value="C:cytoplasm"/>
    <property type="evidence" value="ECO:0000314"/>
    <property type="project" value="UniProtKB"/>
</dbReference>
<dbReference type="GO" id="GO:0098592">
    <property type="term" value="C:cytoplasmic side of apical plasma membrane"/>
    <property type="evidence" value="ECO:0000314"/>
    <property type="project" value="UniProtKB"/>
</dbReference>
<dbReference type="GO" id="GO:0090443">
    <property type="term" value="C:FAR/SIN/STRIPAK complex"/>
    <property type="evidence" value="ECO:0000318"/>
    <property type="project" value="GO_Central"/>
</dbReference>
<dbReference type="GO" id="GO:0035838">
    <property type="term" value="C:growing cell tip"/>
    <property type="evidence" value="ECO:0000314"/>
    <property type="project" value="UniProtKB"/>
</dbReference>
<dbReference type="GO" id="GO:0019901">
    <property type="term" value="F:protein kinase binding"/>
    <property type="evidence" value="ECO:0000353"/>
    <property type="project" value="UniProtKB"/>
</dbReference>
<dbReference type="GO" id="GO:0007029">
    <property type="term" value="P:endoplasmic reticulum organization"/>
    <property type="evidence" value="ECO:0000315"/>
    <property type="project" value="UniProtKB"/>
</dbReference>
<dbReference type="GO" id="GO:0060562">
    <property type="term" value="P:epithelial tube morphogenesis"/>
    <property type="evidence" value="ECO:0000315"/>
    <property type="project" value="UniProtKB"/>
</dbReference>
<dbReference type="GO" id="GO:0090168">
    <property type="term" value="P:Golgi reassembly"/>
    <property type="evidence" value="ECO:0000318"/>
    <property type="project" value="GO_Central"/>
</dbReference>
<dbReference type="GO" id="GO:2001137">
    <property type="term" value="P:positive regulation of endocytic recycling"/>
    <property type="evidence" value="ECO:0000315"/>
    <property type="project" value="UniProtKB"/>
</dbReference>
<dbReference type="GO" id="GO:0043547">
    <property type="term" value="P:positive regulation of GTPase activity"/>
    <property type="evidence" value="ECO:0000315"/>
    <property type="project" value="UniProtKB"/>
</dbReference>
<dbReference type="GO" id="GO:1903358">
    <property type="term" value="P:regulation of Golgi organization"/>
    <property type="evidence" value="ECO:0000315"/>
    <property type="project" value="UniProtKB"/>
</dbReference>
<dbReference type="Gene3D" id="1.20.120.1950">
    <property type="match status" value="1"/>
</dbReference>
<dbReference type="InterPro" id="IPR009652">
    <property type="entry name" value="PDCD10"/>
</dbReference>
<dbReference type="InterPro" id="IPR053750">
    <property type="entry name" value="PDCD10_Homolog"/>
</dbReference>
<dbReference type="InterPro" id="IPR048288">
    <property type="entry name" value="PDCD10_N"/>
</dbReference>
<dbReference type="PANTHER" id="PTHR13250:SF1">
    <property type="entry name" value="PROGRAMMED CELL DEATH PROTEIN 10"/>
    <property type="match status" value="1"/>
</dbReference>
<dbReference type="PANTHER" id="PTHR13250">
    <property type="entry name" value="TF-1 CELL APOPTOSIS RELATED PROTEIN-15"/>
    <property type="match status" value="1"/>
</dbReference>
<dbReference type="Pfam" id="PF06840">
    <property type="entry name" value="PDC10_C"/>
    <property type="match status" value="1"/>
</dbReference>
<dbReference type="Pfam" id="PF20929">
    <property type="entry name" value="PDCD10_N"/>
    <property type="match status" value="1"/>
</dbReference>
<gene>
    <name evidence="6" type="primary">ccm-3</name>
    <name evidence="6" type="ORF">C14A4.11</name>
</gene>
<organism evidence="5">
    <name type="scientific">Caenorhabditis elegans</name>
    <dbReference type="NCBI Taxonomy" id="6239"/>
    <lineage>
        <taxon>Eukaryota</taxon>
        <taxon>Metazoa</taxon>
        <taxon>Ecdysozoa</taxon>
        <taxon>Nematoda</taxon>
        <taxon>Chromadorea</taxon>
        <taxon>Rhabditida</taxon>
        <taxon>Rhabditina</taxon>
        <taxon>Rhabditomorpha</taxon>
        <taxon>Rhabditoidea</taxon>
        <taxon>Rhabditidae</taxon>
        <taxon>Peloderinae</taxon>
        <taxon>Caenorhabditis</taxon>
    </lineage>
</organism>
<feature type="chain" id="PRO_0000433875" description="Programmed cell death protein 10 homolog" evidence="4">
    <location>
        <begin position="1"/>
        <end position="215"/>
    </location>
</feature>
<reference evidence="5" key="1">
    <citation type="journal article" date="1998" name="Science">
        <title>Genome sequence of the nematode C. elegans: a platform for investigating biology.</title>
        <authorList>
            <consortium name="The C. elegans sequencing consortium"/>
        </authorList>
    </citation>
    <scope>NUCLEOTIDE SEQUENCE [LARGE SCALE GENOMIC DNA]</scope>
    <source>
        <strain evidence="5">Bristol N2</strain>
    </source>
</reference>
<reference evidence="4" key="2">
    <citation type="journal article" date="2015" name="Nat. Commun.">
        <title>CCM-3/STRIPAK promotes seamless tube extension through endocytic recycling.</title>
        <authorList>
            <person name="Lant B."/>
            <person name="Yu B."/>
            <person name="Goudreault M."/>
            <person name="Holmyard D."/>
            <person name="Knight J.D."/>
            <person name="Xu P."/>
            <person name="Zhao L."/>
            <person name="Chin K."/>
            <person name="Wallace E."/>
            <person name="Zhen M."/>
            <person name="Gingras A.C."/>
            <person name="Derry W.B."/>
        </authorList>
    </citation>
    <scope>FUNCTION</scope>
    <scope>INTERACTION WITH GCK-1</scope>
    <scope>SUBCELLULAR LOCATION</scope>
    <scope>TISSUE SPECIFICITY</scope>
    <scope>DISRUPTION PHENOTYPE</scope>
</reference>
<evidence type="ECO:0000250" key="1">
    <source>
        <dbReference type="UniProtKB" id="Q8VE70"/>
    </source>
</evidence>
<evidence type="ECO:0000269" key="2">
    <source>
    </source>
</evidence>
<evidence type="ECO:0000303" key="3">
    <source>
    </source>
</evidence>
<evidence type="ECO:0000305" key="4"/>
<evidence type="ECO:0000312" key="5">
    <source>
        <dbReference type="Proteomes" id="UP000001940"/>
    </source>
</evidence>
<evidence type="ECO:0000312" key="6">
    <source>
        <dbReference type="WormBase" id="C14A4.11"/>
    </source>
</evidence>
<comment type="function">
    <text evidence="2">Involved in excretory canal elongation during postembryonic development. Plays a role in promoting Golgi stability, ER integrity and vesicle transport probably by regulating the activation of Rho GTPase cdc-42. Involved in fertility.</text>
</comment>
<comment type="subunit">
    <text evidence="2">Interacts with gck-1.</text>
</comment>
<comment type="subcellular location">
    <subcellularLocation>
        <location evidence="2">Cytoplasm</location>
    </subcellularLocation>
    <subcellularLocation>
        <location evidence="2">Apical cell membrane</location>
        <topology evidence="2">Peripheral membrane protein</topology>
    </subcellularLocation>
    <text evidence="2">Co-localizes with gck-1 at the apical membrane of the excretory canals.</text>
</comment>
<comment type="tissue specificity">
    <text evidence="2">Expressed in pharynx, intestine, germline, vulva and excretory canals.</text>
</comment>
<comment type="disruption phenotype">
    <text evidence="2">Animals are sterile and develop slowly. Excretory canals are approximately 45% shorter and are characterized by a discontinuous and wider lumen, the presence of cysts and an increased number of canalicular vesicles which are swollen. These defects start during the L3 larval stage and become more severe when reaching adulthood. In addition, cdc-42 expression levels and activity are reduced along the excretory canal length. Animals have also a reduced distribution of Golgi and ER components along the excretory canals.</text>
</comment>
<comment type="similarity">
    <text evidence="4">Belongs to the PDCD10 family.</text>
</comment>